<feature type="chain" id="PRO_0000378078" description="Uncharacterized protein YclD">
    <location>
        <begin position="1"/>
        <end position="154"/>
    </location>
</feature>
<name>YCLD_BACSU</name>
<evidence type="ECO:0000305" key="1"/>
<dbReference type="EMBL" id="D50453">
    <property type="protein sequence ID" value="BAA08998.1"/>
    <property type="status" value="ALT_INIT"/>
    <property type="molecule type" value="Genomic_DNA"/>
</dbReference>
<dbReference type="EMBL" id="AL009126">
    <property type="protein sequence ID" value="CAB12159.2"/>
    <property type="molecule type" value="Genomic_DNA"/>
</dbReference>
<dbReference type="PIR" id="A69762">
    <property type="entry name" value="A69762"/>
</dbReference>
<dbReference type="RefSeq" id="NP_388247.2">
    <property type="nucleotide sequence ID" value="NC_000964.3"/>
</dbReference>
<dbReference type="RefSeq" id="WP_009969257.1">
    <property type="nucleotide sequence ID" value="NZ_OZ025638.1"/>
</dbReference>
<dbReference type="SMR" id="C0SPB5"/>
<dbReference type="FunCoup" id="C0SPB5">
    <property type="interactions" value="45"/>
</dbReference>
<dbReference type="STRING" id="224308.BSU03652"/>
<dbReference type="PaxDb" id="224308-BSU03652"/>
<dbReference type="EnsemblBacteria" id="CAB12159">
    <property type="protein sequence ID" value="CAB12159"/>
    <property type="gene ID" value="BSU_03652"/>
</dbReference>
<dbReference type="GeneID" id="938293"/>
<dbReference type="KEGG" id="bsu:BSU03652"/>
<dbReference type="PATRIC" id="fig|224308.43.peg.378"/>
<dbReference type="eggNOG" id="ENOG5032TVI">
    <property type="taxonomic scope" value="Bacteria"/>
</dbReference>
<dbReference type="InParanoid" id="C0SPB5"/>
<dbReference type="OrthoDB" id="6518717at2"/>
<dbReference type="BioCyc" id="BSUB:BSU03652-MONOMER"/>
<dbReference type="Proteomes" id="UP000001570">
    <property type="component" value="Chromosome"/>
</dbReference>
<dbReference type="Gene3D" id="2.30.110.10">
    <property type="entry name" value="Electron Transport, Fmn-binding Protein, Chain A"/>
    <property type="match status" value="1"/>
</dbReference>
<dbReference type="InterPro" id="IPR012349">
    <property type="entry name" value="Split_barrel_FMN-bd"/>
</dbReference>
<dbReference type="SUPFAM" id="SSF50475">
    <property type="entry name" value="FMN-binding split barrel"/>
    <property type="match status" value="1"/>
</dbReference>
<gene>
    <name type="primary">yclD</name>
    <name type="ordered locus">BSU03652</name>
    <name type="ORF">BSU03650</name>
</gene>
<protein>
    <recommendedName>
        <fullName>Uncharacterized protein YclD</fullName>
    </recommendedName>
</protein>
<reference key="1">
    <citation type="journal article" date="1996" name="Microbiology">
        <title>The 25 degrees-36 degrees region of the Bacillus subtilis chromosome: determination of the sequence of a 146 kb segment and identification of 113 genes.</title>
        <authorList>
            <person name="Yamane K."/>
            <person name="Kumano M."/>
            <person name="Kurita K."/>
        </authorList>
    </citation>
    <scope>NUCLEOTIDE SEQUENCE [GENOMIC DNA]</scope>
    <source>
        <strain>168</strain>
    </source>
</reference>
<reference key="2">
    <citation type="journal article" date="1997" name="Nature">
        <title>The complete genome sequence of the Gram-positive bacterium Bacillus subtilis.</title>
        <authorList>
            <person name="Kunst F."/>
            <person name="Ogasawara N."/>
            <person name="Moszer I."/>
            <person name="Albertini A.M."/>
            <person name="Alloni G."/>
            <person name="Azevedo V."/>
            <person name="Bertero M.G."/>
            <person name="Bessieres P."/>
            <person name="Bolotin A."/>
            <person name="Borchert S."/>
            <person name="Borriss R."/>
            <person name="Boursier L."/>
            <person name="Brans A."/>
            <person name="Braun M."/>
            <person name="Brignell S.C."/>
            <person name="Bron S."/>
            <person name="Brouillet S."/>
            <person name="Bruschi C.V."/>
            <person name="Caldwell B."/>
            <person name="Capuano V."/>
            <person name="Carter N.M."/>
            <person name="Choi S.-K."/>
            <person name="Codani J.-J."/>
            <person name="Connerton I.F."/>
            <person name="Cummings N.J."/>
            <person name="Daniel R.A."/>
            <person name="Denizot F."/>
            <person name="Devine K.M."/>
            <person name="Duesterhoeft A."/>
            <person name="Ehrlich S.D."/>
            <person name="Emmerson P.T."/>
            <person name="Entian K.-D."/>
            <person name="Errington J."/>
            <person name="Fabret C."/>
            <person name="Ferrari E."/>
            <person name="Foulger D."/>
            <person name="Fritz C."/>
            <person name="Fujita M."/>
            <person name="Fujita Y."/>
            <person name="Fuma S."/>
            <person name="Galizzi A."/>
            <person name="Galleron N."/>
            <person name="Ghim S.-Y."/>
            <person name="Glaser P."/>
            <person name="Goffeau A."/>
            <person name="Golightly E.J."/>
            <person name="Grandi G."/>
            <person name="Guiseppi G."/>
            <person name="Guy B.J."/>
            <person name="Haga K."/>
            <person name="Haiech J."/>
            <person name="Harwood C.R."/>
            <person name="Henaut A."/>
            <person name="Hilbert H."/>
            <person name="Holsappel S."/>
            <person name="Hosono S."/>
            <person name="Hullo M.-F."/>
            <person name="Itaya M."/>
            <person name="Jones L.-M."/>
            <person name="Joris B."/>
            <person name="Karamata D."/>
            <person name="Kasahara Y."/>
            <person name="Klaerr-Blanchard M."/>
            <person name="Klein C."/>
            <person name="Kobayashi Y."/>
            <person name="Koetter P."/>
            <person name="Koningstein G."/>
            <person name="Krogh S."/>
            <person name="Kumano M."/>
            <person name="Kurita K."/>
            <person name="Lapidus A."/>
            <person name="Lardinois S."/>
            <person name="Lauber J."/>
            <person name="Lazarevic V."/>
            <person name="Lee S.-M."/>
            <person name="Levine A."/>
            <person name="Liu H."/>
            <person name="Masuda S."/>
            <person name="Mauel C."/>
            <person name="Medigue C."/>
            <person name="Medina N."/>
            <person name="Mellado R.P."/>
            <person name="Mizuno M."/>
            <person name="Moestl D."/>
            <person name="Nakai S."/>
            <person name="Noback M."/>
            <person name="Noone D."/>
            <person name="O'Reilly M."/>
            <person name="Ogawa K."/>
            <person name="Ogiwara A."/>
            <person name="Oudega B."/>
            <person name="Park S.-H."/>
            <person name="Parro V."/>
            <person name="Pohl T.M."/>
            <person name="Portetelle D."/>
            <person name="Porwollik S."/>
            <person name="Prescott A.M."/>
            <person name="Presecan E."/>
            <person name="Pujic P."/>
            <person name="Purnelle B."/>
            <person name="Rapoport G."/>
            <person name="Rey M."/>
            <person name="Reynolds S."/>
            <person name="Rieger M."/>
            <person name="Rivolta C."/>
            <person name="Rocha E."/>
            <person name="Roche B."/>
            <person name="Rose M."/>
            <person name="Sadaie Y."/>
            <person name="Sato T."/>
            <person name="Scanlan E."/>
            <person name="Schleich S."/>
            <person name="Schroeter R."/>
            <person name="Scoffone F."/>
            <person name="Sekiguchi J."/>
            <person name="Sekowska A."/>
            <person name="Seror S.J."/>
            <person name="Serror P."/>
            <person name="Shin B.-S."/>
            <person name="Soldo B."/>
            <person name="Sorokin A."/>
            <person name="Tacconi E."/>
            <person name="Takagi T."/>
            <person name="Takahashi H."/>
            <person name="Takemaru K."/>
            <person name="Takeuchi M."/>
            <person name="Tamakoshi A."/>
            <person name="Tanaka T."/>
            <person name="Terpstra P."/>
            <person name="Tognoni A."/>
            <person name="Tosato V."/>
            <person name="Uchiyama S."/>
            <person name="Vandenbol M."/>
            <person name="Vannier F."/>
            <person name="Vassarotti A."/>
            <person name="Viari A."/>
            <person name="Wambutt R."/>
            <person name="Wedler E."/>
            <person name="Wedler H."/>
            <person name="Weitzenegger T."/>
            <person name="Winters P."/>
            <person name="Wipat A."/>
            <person name="Yamamoto H."/>
            <person name="Yamane K."/>
            <person name="Yasumoto K."/>
            <person name="Yata K."/>
            <person name="Yoshida K."/>
            <person name="Yoshikawa H.-F."/>
            <person name="Zumstein E."/>
            <person name="Yoshikawa H."/>
            <person name="Danchin A."/>
        </authorList>
    </citation>
    <scope>NUCLEOTIDE SEQUENCE [LARGE SCALE GENOMIC DNA]</scope>
    <source>
        <strain>168</strain>
    </source>
</reference>
<reference key="3">
    <citation type="journal article" date="2009" name="Microbiology">
        <title>From a consortium sequence to a unified sequence: the Bacillus subtilis 168 reference genome a decade later.</title>
        <authorList>
            <person name="Barbe V."/>
            <person name="Cruveiller S."/>
            <person name="Kunst F."/>
            <person name="Lenoble P."/>
            <person name="Meurice G."/>
            <person name="Sekowska A."/>
            <person name="Vallenet D."/>
            <person name="Wang T."/>
            <person name="Moszer I."/>
            <person name="Medigue C."/>
            <person name="Danchin A."/>
        </authorList>
    </citation>
    <scope>SEQUENCE REVISION</scope>
</reference>
<sequence>MIRVNCMSDRLFELLDGSCLNEKQHEAFVLQTVSEDGWPHAAMISAGEIIALSRTDIRIALWKNTMTSANILRTGKAQFTAWWKGAAYYVKLECAPLPPLKDAEYERDRFSCRIVSVKEDVAKYADLTSGVRIQLHSPEEVLSRWKKTLEDLKR</sequence>
<comment type="sequence caution" evidence="1">
    <conflict type="erroneous initiation">
        <sequence resource="EMBL-CDS" id="BAA08998"/>
    </conflict>
    <text>Extended N-terminus.</text>
</comment>
<accession>C0SPB5</accession>
<accession>P94406</accession>
<accession>Q797P7</accession>
<keyword id="KW-1185">Reference proteome</keyword>
<proteinExistence type="predicted"/>
<organism>
    <name type="scientific">Bacillus subtilis (strain 168)</name>
    <dbReference type="NCBI Taxonomy" id="224308"/>
    <lineage>
        <taxon>Bacteria</taxon>
        <taxon>Bacillati</taxon>
        <taxon>Bacillota</taxon>
        <taxon>Bacilli</taxon>
        <taxon>Bacillales</taxon>
        <taxon>Bacillaceae</taxon>
        <taxon>Bacillus</taxon>
    </lineage>
</organism>